<keyword id="KW-0067">ATP-binding</keyword>
<keyword id="KW-0963">Cytoplasm</keyword>
<keyword id="KW-0227">DNA damage</keyword>
<keyword id="KW-0234">DNA repair</keyword>
<keyword id="KW-0235">DNA replication</keyword>
<keyword id="KW-0238">DNA-binding</keyword>
<keyword id="KW-0547">Nucleotide-binding</keyword>
<keyword id="KW-1185">Reference proteome</keyword>
<keyword id="KW-0742">SOS response</keyword>
<comment type="function">
    <text evidence="1">The RecF protein is involved in DNA metabolism; it is required for DNA replication and normal SOS inducibility. RecF binds preferentially to single-stranded, linear DNA. It also seems to bind ATP.</text>
</comment>
<comment type="subcellular location">
    <subcellularLocation>
        <location evidence="1">Cytoplasm</location>
    </subcellularLocation>
</comment>
<comment type="similarity">
    <text evidence="1">Belongs to the RecF family.</text>
</comment>
<accession>Q03D52</accession>
<proteinExistence type="inferred from homology"/>
<name>RECF_LACP3</name>
<protein>
    <recommendedName>
        <fullName evidence="1">DNA replication and repair protein RecF</fullName>
    </recommendedName>
</protein>
<sequence length="371" mass="41632">MKLDHLVLKNYRNYAAVDTTFSPEINVLIGANAQGKTNLLESIYVLALARSHRTNNDKELIRFGSEFARVSGQVSRQSGSHQLELIISHQGKRARIDRIEQPKLSQYLGHFNVILFAPEDLAIVKGSPAGRRRFIDMEFGQMSPKYLYNLSQYKTFLKQRNAYLKQLKYHQAKDLVYLDVLTDSLAAFGAELITARAKLLETMSDYAATIQQDITKGRESLHFSYQTQVDPSLRGNSEQVYTALGEMFAKQQAREIEQGTSLVGPQRDDVLFIVNDKDVANFGSQGQQRTTALAVKLAEIDLMKDQTGEYPVLLLDDVLSELDAARQTHLLKAIQTKVQTFLTTTSLEGIQKEIIATPAVFKVDEGTLARA</sequence>
<gene>
    <name evidence="1" type="primary">recF</name>
    <name type="ordered locus">LSEI_0004</name>
</gene>
<evidence type="ECO:0000255" key="1">
    <source>
        <dbReference type="HAMAP-Rule" id="MF_00365"/>
    </source>
</evidence>
<dbReference type="EMBL" id="CP000423">
    <property type="protein sequence ID" value="ABJ68870.1"/>
    <property type="molecule type" value="Genomic_DNA"/>
</dbReference>
<dbReference type="RefSeq" id="WP_003662310.1">
    <property type="nucleotide sequence ID" value="NC_008526.1"/>
</dbReference>
<dbReference type="RefSeq" id="YP_805312.1">
    <property type="nucleotide sequence ID" value="NC_008526.1"/>
</dbReference>
<dbReference type="SMR" id="Q03D52"/>
<dbReference type="STRING" id="321967.LSEI_0004"/>
<dbReference type="PaxDb" id="321967-LSEI_0004"/>
<dbReference type="KEGG" id="lca:LSEI_0004"/>
<dbReference type="PATRIC" id="fig|321967.11.peg.39"/>
<dbReference type="HOGENOM" id="CLU_040267_0_1_9"/>
<dbReference type="Proteomes" id="UP000001651">
    <property type="component" value="Chromosome"/>
</dbReference>
<dbReference type="GO" id="GO:0005737">
    <property type="term" value="C:cytoplasm"/>
    <property type="evidence" value="ECO:0007669"/>
    <property type="project" value="UniProtKB-SubCell"/>
</dbReference>
<dbReference type="GO" id="GO:0005524">
    <property type="term" value="F:ATP binding"/>
    <property type="evidence" value="ECO:0007669"/>
    <property type="project" value="UniProtKB-UniRule"/>
</dbReference>
<dbReference type="GO" id="GO:0003697">
    <property type="term" value="F:single-stranded DNA binding"/>
    <property type="evidence" value="ECO:0007669"/>
    <property type="project" value="UniProtKB-UniRule"/>
</dbReference>
<dbReference type="GO" id="GO:0006260">
    <property type="term" value="P:DNA replication"/>
    <property type="evidence" value="ECO:0007669"/>
    <property type="project" value="UniProtKB-UniRule"/>
</dbReference>
<dbReference type="GO" id="GO:0000731">
    <property type="term" value="P:DNA synthesis involved in DNA repair"/>
    <property type="evidence" value="ECO:0007669"/>
    <property type="project" value="TreeGrafter"/>
</dbReference>
<dbReference type="GO" id="GO:0006302">
    <property type="term" value="P:double-strand break repair"/>
    <property type="evidence" value="ECO:0007669"/>
    <property type="project" value="TreeGrafter"/>
</dbReference>
<dbReference type="GO" id="GO:0009432">
    <property type="term" value="P:SOS response"/>
    <property type="evidence" value="ECO:0007669"/>
    <property type="project" value="UniProtKB-UniRule"/>
</dbReference>
<dbReference type="CDD" id="cd03242">
    <property type="entry name" value="ABC_RecF"/>
    <property type="match status" value="1"/>
</dbReference>
<dbReference type="Gene3D" id="3.40.50.300">
    <property type="entry name" value="P-loop containing nucleotide triphosphate hydrolases"/>
    <property type="match status" value="1"/>
</dbReference>
<dbReference type="Gene3D" id="1.20.1050.90">
    <property type="entry name" value="RecF/RecN/SMC, N-terminal domain"/>
    <property type="match status" value="1"/>
</dbReference>
<dbReference type="HAMAP" id="MF_00365">
    <property type="entry name" value="RecF"/>
    <property type="match status" value="1"/>
</dbReference>
<dbReference type="InterPro" id="IPR001238">
    <property type="entry name" value="DNA-binding_RecF"/>
</dbReference>
<dbReference type="InterPro" id="IPR018078">
    <property type="entry name" value="DNA-binding_RecF_CS"/>
</dbReference>
<dbReference type="InterPro" id="IPR027417">
    <property type="entry name" value="P-loop_NTPase"/>
</dbReference>
<dbReference type="InterPro" id="IPR003395">
    <property type="entry name" value="RecF/RecN/SMC_N"/>
</dbReference>
<dbReference type="InterPro" id="IPR042174">
    <property type="entry name" value="RecF_2"/>
</dbReference>
<dbReference type="NCBIfam" id="TIGR00611">
    <property type="entry name" value="recf"/>
    <property type="match status" value="1"/>
</dbReference>
<dbReference type="PANTHER" id="PTHR32182">
    <property type="entry name" value="DNA REPLICATION AND REPAIR PROTEIN RECF"/>
    <property type="match status" value="1"/>
</dbReference>
<dbReference type="PANTHER" id="PTHR32182:SF0">
    <property type="entry name" value="DNA REPLICATION AND REPAIR PROTEIN RECF"/>
    <property type="match status" value="1"/>
</dbReference>
<dbReference type="Pfam" id="PF02463">
    <property type="entry name" value="SMC_N"/>
    <property type="match status" value="1"/>
</dbReference>
<dbReference type="SUPFAM" id="SSF52540">
    <property type="entry name" value="P-loop containing nucleoside triphosphate hydrolases"/>
    <property type="match status" value="1"/>
</dbReference>
<dbReference type="PROSITE" id="PS00617">
    <property type="entry name" value="RECF_1"/>
    <property type="match status" value="1"/>
</dbReference>
<dbReference type="PROSITE" id="PS00618">
    <property type="entry name" value="RECF_2"/>
    <property type="match status" value="1"/>
</dbReference>
<feature type="chain" id="PRO_1000048530" description="DNA replication and repair protein RecF">
    <location>
        <begin position="1"/>
        <end position="371"/>
    </location>
</feature>
<feature type="binding site" evidence="1">
    <location>
        <begin position="30"/>
        <end position="37"/>
    </location>
    <ligand>
        <name>ATP</name>
        <dbReference type="ChEBI" id="CHEBI:30616"/>
    </ligand>
</feature>
<organism>
    <name type="scientific">Lacticaseibacillus paracasei (strain ATCC 334 / BCRC 17002 / CCUG 31169 / CIP 107868 / KCTC 3260 / NRRL B-441)</name>
    <name type="common">Lactobacillus paracasei</name>
    <dbReference type="NCBI Taxonomy" id="321967"/>
    <lineage>
        <taxon>Bacteria</taxon>
        <taxon>Bacillati</taxon>
        <taxon>Bacillota</taxon>
        <taxon>Bacilli</taxon>
        <taxon>Lactobacillales</taxon>
        <taxon>Lactobacillaceae</taxon>
        <taxon>Lacticaseibacillus</taxon>
    </lineage>
</organism>
<reference key="1">
    <citation type="journal article" date="2006" name="Proc. Natl. Acad. Sci. U.S.A.">
        <title>Comparative genomics of the lactic acid bacteria.</title>
        <authorList>
            <person name="Makarova K.S."/>
            <person name="Slesarev A."/>
            <person name="Wolf Y.I."/>
            <person name="Sorokin A."/>
            <person name="Mirkin B."/>
            <person name="Koonin E.V."/>
            <person name="Pavlov A."/>
            <person name="Pavlova N."/>
            <person name="Karamychev V."/>
            <person name="Polouchine N."/>
            <person name="Shakhova V."/>
            <person name="Grigoriev I."/>
            <person name="Lou Y."/>
            <person name="Rohksar D."/>
            <person name="Lucas S."/>
            <person name="Huang K."/>
            <person name="Goodstein D.M."/>
            <person name="Hawkins T."/>
            <person name="Plengvidhya V."/>
            <person name="Welker D."/>
            <person name="Hughes J."/>
            <person name="Goh Y."/>
            <person name="Benson A."/>
            <person name="Baldwin K."/>
            <person name="Lee J.-H."/>
            <person name="Diaz-Muniz I."/>
            <person name="Dosti B."/>
            <person name="Smeianov V."/>
            <person name="Wechter W."/>
            <person name="Barabote R."/>
            <person name="Lorca G."/>
            <person name="Altermann E."/>
            <person name="Barrangou R."/>
            <person name="Ganesan B."/>
            <person name="Xie Y."/>
            <person name="Rawsthorne H."/>
            <person name="Tamir D."/>
            <person name="Parker C."/>
            <person name="Breidt F."/>
            <person name="Broadbent J.R."/>
            <person name="Hutkins R."/>
            <person name="O'Sullivan D."/>
            <person name="Steele J."/>
            <person name="Unlu G."/>
            <person name="Saier M.H. Jr."/>
            <person name="Klaenhammer T."/>
            <person name="Richardson P."/>
            <person name="Kozyavkin S."/>
            <person name="Weimer B.C."/>
            <person name="Mills D.A."/>
        </authorList>
    </citation>
    <scope>NUCLEOTIDE SEQUENCE [LARGE SCALE GENOMIC DNA]</scope>
    <source>
        <strain>ATCC 334 / BCRC 17002 / CCUG 31169 / CIP 107868 / KCTC 3260 / NRRL B-441</strain>
    </source>
</reference>